<gene>
    <name type="primary">Gng11</name>
    <name type="synonym">Gngt11</name>
</gene>
<accession>P61954</accession>
<accession>P50152</accession>
<accession>Q4V8M0</accession>
<comment type="function">
    <text evidence="1">Guanine nucleotide-binding proteins (G proteins) are involved as a modulator or transducer in various transmembrane signaling systems. The beta and gamma chains are required for the GTPase activity, for replacement of GDP by GTP, and for G protein-effector interaction (By similarity).</text>
</comment>
<comment type="subunit">
    <text evidence="1">G proteins are composed of 3 units, alpha, beta and gamma. Interacts with beta-1 and beta-3, but not with beta-2 (By similarity).</text>
</comment>
<comment type="subcellular location">
    <subcellularLocation>
        <location evidence="4">Cell membrane</location>
        <topology evidence="4">Lipid-anchor</topology>
        <orientation evidence="4">Cytoplasmic side</orientation>
    </subcellularLocation>
</comment>
<comment type="similarity">
    <text evidence="4">Belongs to the G protein gamma family.</text>
</comment>
<protein>
    <recommendedName>
        <fullName>Guanine nucleotide-binding protein G(I)/G(S)/G(O) subunit gamma-11</fullName>
    </recommendedName>
</protein>
<reference key="1">
    <citation type="submission" date="2000-04" db="EMBL/GenBank/DDBJ databases">
        <title>Identification and cloning of rat G protein gamma 11 subunit.</title>
        <authorList>
            <person name="Costain W.J."/>
            <person name="Mishra R.K."/>
        </authorList>
    </citation>
    <scope>NUCLEOTIDE SEQUENCE [MRNA]</scope>
    <source>
        <strain>Sprague-Dawley</strain>
    </source>
</reference>
<reference key="2">
    <citation type="journal article" date="2004" name="Genome Res.">
        <title>The status, quality, and expansion of the NIH full-length cDNA project: the Mammalian Gene Collection (MGC).</title>
        <authorList>
            <consortium name="The MGC Project Team"/>
        </authorList>
    </citation>
    <scope>NUCLEOTIDE SEQUENCE [LARGE SCALE MRNA]</scope>
    <source>
        <tissue>Testis</tissue>
    </source>
</reference>
<name>GBG11_RAT</name>
<sequence length="73" mass="8481">MPALHIEDLPEKEKLKMEVEQLRKEVKLQRQQVSKCSEEIKNYIEERSGEDPLVKGIPEDKNPFKEKGSCVIS</sequence>
<organism>
    <name type="scientific">Rattus norvegicus</name>
    <name type="common">Rat</name>
    <dbReference type="NCBI Taxonomy" id="10116"/>
    <lineage>
        <taxon>Eukaryota</taxon>
        <taxon>Metazoa</taxon>
        <taxon>Chordata</taxon>
        <taxon>Craniata</taxon>
        <taxon>Vertebrata</taxon>
        <taxon>Euteleostomi</taxon>
        <taxon>Mammalia</taxon>
        <taxon>Eutheria</taxon>
        <taxon>Euarchontoglires</taxon>
        <taxon>Glires</taxon>
        <taxon>Rodentia</taxon>
        <taxon>Myomorpha</taxon>
        <taxon>Muroidea</taxon>
        <taxon>Muridae</taxon>
        <taxon>Murinae</taxon>
        <taxon>Rattus</taxon>
    </lineage>
</organism>
<dbReference type="EMBL" id="AF257110">
    <property type="protein sequence ID" value="AAF68984.1"/>
    <property type="molecule type" value="mRNA"/>
</dbReference>
<dbReference type="EMBL" id="BC097320">
    <property type="protein sequence ID" value="AAH97320.1"/>
    <property type="molecule type" value="mRNA"/>
</dbReference>
<dbReference type="RefSeq" id="NP_071791.1">
    <property type="nucleotide sequence ID" value="NM_022396.2"/>
</dbReference>
<dbReference type="RefSeq" id="XP_003749746.1">
    <property type="nucleotide sequence ID" value="XM_003749698.3"/>
</dbReference>
<dbReference type="SMR" id="P61954"/>
<dbReference type="FunCoup" id="P61954">
    <property type="interactions" value="295"/>
</dbReference>
<dbReference type="STRING" id="10116.ENSRNOP00000065818"/>
<dbReference type="PhosphoSitePlus" id="P61954"/>
<dbReference type="PaxDb" id="10116-ENSRNOP00000065818"/>
<dbReference type="Ensembl" id="ENSRNOT00000074048.2">
    <property type="protein sequence ID" value="ENSRNOP00000065818.1"/>
    <property type="gene ID" value="ENSRNOG00000050469.2"/>
</dbReference>
<dbReference type="GeneID" id="64199"/>
<dbReference type="KEGG" id="rno:64199"/>
<dbReference type="UCSC" id="RGD:621515">
    <property type="organism name" value="rat"/>
</dbReference>
<dbReference type="AGR" id="RGD:621515"/>
<dbReference type="CTD" id="2791"/>
<dbReference type="RGD" id="621515">
    <property type="gene designation" value="Gng11"/>
</dbReference>
<dbReference type="eggNOG" id="KOG4119">
    <property type="taxonomic scope" value="Eukaryota"/>
</dbReference>
<dbReference type="GeneTree" id="ENSGT01100000263525"/>
<dbReference type="HOGENOM" id="CLU_168377_2_0_1"/>
<dbReference type="InParanoid" id="P61954"/>
<dbReference type="OMA" id="KLERWMT"/>
<dbReference type="OrthoDB" id="9933679at2759"/>
<dbReference type="PhylomeDB" id="P61954"/>
<dbReference type="TreeFam" id="TF319909"/>
<dbReference type="Reactome" id="R-RNO-1296041">
    <property type="pathway name" value="Activation of G protein gated Potassium channels"/>
</dbReference>
<dbReference type="Reactome" id="R-RNO-202040">
    <property type="pathway name" value="G-protein activation"/>
</dbReference>
<dbReference type="Reactome" id="R-RNO-381676">
    <property type="pathway name" value="Glucagon-like Peptide-1 (GLP1) regulates insulin secretion"/>
</dbReference>
<dbReference type="Reactome" id="R-RNO-392170">
    <property type="pathway name" value="ADP signalling through P2Y purinoceptor 12"/>
</dbReference>
<dbReference type="Reactome" id="R-RNO-392451">
    <property type="pathway name" value="G beta:gamma signalling through PI3Kgamma"/>
</dbReference>
<dbReference type="Reactome" id="R-RNO-400042">
    <property type="pathway name" value="Adrenaline,noradrenaline inhibits insulin secretion"/>
</dbReference>
<dbReference type="Reactome" id="R-RNO-4086398">
    <property type="pathway name" value="Ca2+ pathway"/>
</dbReference>
<dbReference type="Reactome" id="R-RNO-416476">
    <property type="pathway name" value="G alpha (q) signalling events"/>
</dbReference>
<dbReference type="Reactome" id="R-RNO-418594">
    <property type="pathway name" value="G alpha (i) signalling events"/>
</dbReference>
<dbReference type="Reactome" id="R-RNO-418597">
    <property type="pathway name" value="G alpha (z) signalling events"/>
</dbReference>
<dbReference type="Reactome" id="R-RNO-420092">
    <property type="pathway name" value="Glucagon-type ligand receptors"/>
</dbReference>
<dbReference type="Reactome" id="R-RNO-428930">
    <property type="pathway name" value="Thromboxane signalling through TP receptor"/>
</dbReference>
<dbReference type="Reactome" id="R-RNO-432040">
    <property type="pathway name" value="Vasopressin regulates renal water homeostasis via Aquaporins"/>
</dbReference>
<dbReference type="Reactome" id="R-RNO-456926">
    <property type="pathway name" value="Thrombin signalling through proteinase activated receptors (PARs)"/>
</dbReference>
<dbReference type="Reactome" id="R-RNO-8964616">
    <property type="pathway name" value="G beta:gamma signalling through CDC42"/>
</dbReference>
<dbReference type="Reactome" id="R-RNO-9856530">
    <property type="pathway name" value="High laminar flow shear stress activates signaling by PIEZO1 and PECAM1:CDH5:KDR in endothelial cells"/>
</dbReference>
<dbReference type="Reactome" id="R-RNO-997272">
    <property type="pathway name" value="Inhibition of voltage gated Ca2+ channels via Gbeta/gamma subunits"/>
</dbReference>
<dbReference type="PRO" id="PR:P61954"/>
<dbReference type="Proteomes" id="UP000002494">
    <property type="component" value="Chromosome 4"/>
</dbReference>
<dbReference type="Bgee" id="ENSRNOG00000047914">
    <property type="expression patterns" value="Expressed in heart and 19 other cell types or tissues"/>
</dbReference>
<dbReference type="GO" id="GO:0005834">
    <property type="term" value="C:heterotrimeric G-protein complex"/>
    <property type="evidence" value="ECO:0000318"/>
    <property type="project" value="GO_Central"/>
</dbReference>
<dbReference type="GO" id="GO:0031681">
    <property type="term" value="F:G-protein beta-subunit binding"/>
    <property type="evidence" value="ECO:0000318"/>
    <property type="project" value="GO_Central"/>
</dbReference>
<dbReference type="GO" id="GO:0007186">
    <property type="term" value="P:G protein-coupled receptor signaling pathway"/>
    <property type="evidence" value="ECO:0000318"/>
    <property type="project" value="GO_Central"/>
</dbReference>
<dbReference type="CDD" id="cd00068">
    <property type="entry name" value="GGL"/>
    <property type="match status" value="1"/>
</dbReference>
<dbReference type="FunFam" id="4.10.260.10:FF:000001">
    <property type="entry name" value="Guanine nucleotide-binding protein subunit gamma"/>
    <property type="match status" value="1"/>
</dbReference>
<dbReference type="Gene3D" id="4.10.260.10">
    <property type="entry name" value="Transducin (heterotrimeric G protein), gamma chain"/>
    <property type="match status" value="1"/>
</dbReference>
<dbReference type="InterPro" id="IPR015898">
    <property type="entry name" value="G-protein_gamma-like_dom"/>
</dbReference>
<dbReference type="InterPro" id="IPR036284">
    <property type="entry name" value="GGL_sf"/>
</dbReference>
<dbReference type="InterPro" id="IPR001770">
    <property type="entry name" value="Gprotein-gamma"/>
</dbReference>
<dbReference type="PANTHER" id="PTHR13809">
    <property type="entry name" value="GUANINE NUCLEOTIDE-BINDING PROTEIN GAMMA SUBUNIT"/>
    <property type="match status" value="1"/>
</dbReference>
<dbReference type="Pfam" id="PF00631">
    <property type="entry name" value="G-gamma"/>
    <property type="match status" value="1"/>
</dbReference>
<dbReference type="PRINTS" id="PR00321">
    <property type="entry name" value="GPROTEING"/>
</dbReference>
<dbReference type="SMART" id="SM01224">
    <property type="entry name" value="G_gamma"/>
    <property type="match status" value="1"/>
</dbReference>
<dbReference type="SMART" id="SM00224">
    <property type="entry name" value="GGL"/>
    <property type="match status" value="1"/>
</dbReference>
<dbReference type="SUPFAM" id="SSF48670">
    <property type="entry name" value="Transducin (heterotrimeric G protein), gamma chain"/>
    <property type="match status" value="1"/>
</dbReference>
<dbReference type="PROSITE" id="PS50058">
    <property type="entry name" value="G_PROTEIN_GAMMA"/>
    <property type="match status" value="1"/>
</dbReference>
<keyword id="KW-1003">Cell membrane</keyword>
<keyword id="KW-0449">Lipoprotein</keyword>
<keyword id="KW-0472">Membrane</keyword>
<keyword id="KW-0488">Methylation</keyword>
<keyword id="KW-0636">Prenylation</keyword>
<keyword id="KW-1185">Reference proteome</keyword>
<keyword id="KW-0807">Transducer</keyword>
<proteinExistence type="inferred from homology"/>
<feature type="chain" id="PRO_0000012663" description="Guanine nucleotide-binding protein G(I)/G(S)/G(O) subunit gamma-11">
    <location>
        <begin position="1"/>
        <end position="70"/>
    </location>
</feature>
<feature type="propeptide" id="PRO_0000012664" description="Removed in mature form" evidence="1">
    <location>
        <begin position="71"/>
        <end position="73"/>
    </location>
</feature>
<feature type="region of interest" description="Disordered" evidence="3">
    <location>
        <begin position="51"/>
        <end position="73"/>
    </location>
</feature>
<feature type="modified residue" description="Cysteine methyl ester" evidence="2">
    <location>
        <position position="70"/>
    </location>
</feature>
<feature type="lipid moiety-binding region" description="S-farnesyl cysteine" evidence="1">
    <location>
        <position position="70"/>
    </location>
</feature>
<evidence type="ECO:0000250" key="1"/>
<evidence type="ECO:0000255" key="2"/>
<evidence type="ECO:0000256" key="3">
    <source>
        <dbReference type="SAM" id="MobiDB-lite"/>
    </source>
</evidence>
<evidence type="ECO:0000305" key="4"/>